<protein>
    <recommendedName>
        <fullName>Uncharacterized protein C2A9.13</fullName>
    </recommendedName>
</protein>
<dbReference type="EMBL" id="CU329671">
    <property type="protein sequence ID" value="CAB66421.1"/>
    <property type="molecule type" value="Genomic_DNA"/>
</dbReference>
<dbReference type="RefSeq" id="NP_596217.1">
    <property type="nucleotide sequence ID" value="NM_001022136.1"/>
</dbReference>
<dbReference type="BioGRID" id="276955">
    <property type="interactions" value="6"/>
</dbReference>
<dbReference type="STRING" id="284812.Q9P7Z4"/>
<dbReference type="PaxDb" id="4896-SPBC2A9.13.1"/>
<dbReference type="EnsemblFungi" id="SPBC2A9.13.1">
    <property type="protein sequence ID" value="SPBC2A9.13.1:pep"/>
    <property type="gene ID" value="SPBC2A9.13"/>
</dbReference>
<dbReference type="KEGG" id="spo:2540427"/>
<dbReference type="PomBase" id="SPBC2A9.13"/>
<dbReference type="VEuPathDB" id="FungiDB:SPBC2A9.13"/>
<dbReference type="HOGENOM" id="CLU_3160243_0_0_1"/>
<dbReference type="InParanoid" id="Q9P7Z4"/>
<dbReference type="PRO" id="PR:Q9P7Z4"/>
<dbReference type="Proteomes" id="UP000002485">
    <property type="component" value="Chromosome II"/>
</dbReference>
<accession>Q9P7Z4</accession>
<sequence>MQVVVNNAGDLQIVYEMKSAVVKRAEFLGVGGCTRTIGIDLKKGVSNF</sequence>
<reference key="1">
    <citation type="journal article" date="2002" name="Nature">
        <title>The genome sequence of Schizosaccharomyces pombe.</title>
        <authorList>
            <person name="Wood V."/>
            <person name="Gwilliam R."/>
            <person name="Rajandream M.A."/>
            <person name="Lyne M.H."/>
            <person name="Lyne R."/>
            <person name="Stewart A."/>
            <person name="Sgouros J.G."/>
            <person name="Peat N."/>
            <person name="Hayles J."/>
            <person name="Baker S.G."/>
            <person name="Basham D."/>
            <person name="Bowman S."/>
            <person name="Brooks K."/>
            <person name="Brown D."/>
            <person name="Brown S."/>
            <person name="Chillingworth T."/>
            <person name="Churcher C.M."/>
            <person name="Collins M."/>
            <person name="Connor R."/>
            <person name="Cronin A."/>
            <person name="Davis P."/>
            <person name="Feltwell T."/>
            <person name="Fraser A."/>
            <person name="Gentles S."/>
            <person name="Goble A."/>
            <person name="Hamlin N."/>
            <person name="Harris D.E."/>
            <person name="Hidalgo J."/>
            <person name="Hodgson G."/>
            <person name="Holroyd S."/>
            <person name="Hornsby T."/>
            <person name="Howarth S."/>
            <person name="Huckle E.J."/>
            <person name="Hunt S."/>
            <person name="Jagels K."/>
            <person name="James K.D."/>
            <person name="Jones L."/>
            <person name="Jones M."/>
            <person name="Leather S."/>
            <person name="McDonald S."/>
            <person name="McLean J."/>
            <person name="Mooney P."/>
            <person name="Moule S."/>
            <person name="Mungall K.L."/>
            <person name="Murphy L.D."/>
            <person name="Niblett D."/>
            <person name="Odell C."/>
            <person name="Oliver K."/>
            <person name="O'Neil S."/>
            <person name="Pearson D."/>
            <person name="Quail M.A."/>
            <person name="Rabbinowitsch E."/>
            <person name="Rutherford K.M."/>
            <person name="Rutter S."/>
            <person name="Saunders D."/>
            <person name="Seeger K."/>
            <person name="Sharp S."/>
            <person name="Skelton J."/>
            <person name="Simmonds M.N."/>
            <person name="Squares R."/>
            <person name="Squares S."/>
            <person name="Stevens K."/>
            <person name="Taylor K."/>
            <person name="Taylor R.G."/>
            <person name="Tivey A."/>
            <person name="Walsh S.V."/>
            <person name="Warren T."/>
            <person name="Whitehead S."/>
            <person name="Woodward J.R."/>
            <person name="Volckaert G."/>
            <person name="Aert R."/>
            <person name="Robben J."/>
            <person name="Grymonprez B."/>
            <person name="Weltjens I."/>
            <person name="Vanstreels E."/>
            <person name="Rieger M."/>
            <person name="Schaefer M."/>
            <person name="Mueller-Auer S."/>
            <person name="Gabel C."/>
            <person name="Fuchs M."/>
            <person name="Duesterhoeft A."/>
            <person name="Fritzc C."/>
            <person name="Holzer E."/>
            <person name="Moestl D."/>
            <person name="Hilbert H."/>
            <person name="Borzym K."/>
            <person name="Langer I."/>
            <person name="Beck A."/>
            <person name="Lehrach H."/>
            <person name="Reinhardt R."/>
            <person name="Pohl T.M."/>
            <person name="Eger P."/>
            <person name="Zimmermann W."/>
            <person name="Wedler H."/>
            <person name="Wambutt R."/>
            <person name="Purnelle B."/>
            <person name="Goffeau A."/>
            <person name="Cadieu E."/>
            <person name="Dreano S."/>
            <person name="Gloux S."/>
            <person name="Lelaure V."/>
            <person name="Mottier S."/>
            <person name="Galibert F."/>
            <person name="Aves S.J."/>
            <person name="Xiang Z."/>
            <person name="Hunt C."/>
            <person name="Moore K."/>
            <person name="Hurst S.M."/>
            <person name="Lucas M."/>
            <person name="Rochet M."/>
            <person name="Gaillardin C."/>
            <person name="Tallada V.A."/>
            <person name="Garzon A."/>
            <person name="Thode G."/>
            <person name="Daga R.R."/>
            <person name="Cruzado L."/>
            <person name="Jimenez J."/>
            <person name="Sanchez M."/>
            <person name="del Rey F."/>
            <person name="Benito J."/>
            <person name="Dominguez A."/>
            <person name="Revuelta J.L."/>
            <person name="Moreno S."/>
            <person name="Armstrong J."/>
            <person name="Forsburg S.L."/>
            <person name="Cerutti L."/>
            <person name="Lowe T."/>
            <person name="McCombie W.R."/>
            <person name="Paulsen I."/>
            <person name="Potashkin J."/>
            <person name="Shpakovski G.V."/>
            <person name="Ussery D."/>
            <person name="Barrell B.G."/>
            <person name="Nurse P."/>
        </authorList>
    </citation>
    <scope>NUCLEOTIDE SEQUENCE [LARGE SCALE GENOMIC DNA]</scope>
    <source>
        <strain>972 / ATCC 24843</strain>
    </source>
</reference>
<gene>
    <name type="ORF">SPBC2A9.13</name>
</gene>
<name>YGID_SCHPO</name>
<feature type="chain" id="PRO_0000116757" description="Uncharacterized protein C2A9.13">
    <location>
        <begin position="1"/>
        <end position="48"/>
    </location>
</feature>
<proteinExistence type="predicted"/>
<keyword id="KW-1185">Reference proteome</keyword>
<organism>
    <name type="scientific">Schizosaccharomyces pombe (strain 972 / ATCC 24843)</name>
    <name type="common">Fission yeast</name>
    <dbReference type="NCBI Taxonomy" id="284812"/>
    <lineage>
        <taxon>Eukaryota</taxon>
        <taxon>Fungi</taxon>
        <taxon>Dikarya</taxon>
        <taxon>Ascomycota</taxon>
        <taxon>Taphrinomycotina</taxon>
        <taxon>Schizosaccharomycetes</taxon>
        <taxon>Schizosaccharomycetales</taxon>
        <taxon>Schizosaccharomycetaceae</taxon>
        <taxon>Schizosaccharomyces</taxon>
    </lineage>
</organism>